<dbReference type="EC" id="3.1.21.10" evidence="1"/>
<dbReference type="EMBL" id="CP000655">
    <property type="protein sequence ID" value="ABP35090.1"/>
    <property type="molecule type" value="Genomic_DNA"/>
</dbReference>
<dbReference type="RefSeq" id="WP_011903713.1">
    <property type="nucleotide sequence ID" value="NC_009379.1"/>
</dbReference>
<dbReference type="SMR" id="A4T026"/>
<dbReference type="GeneID" id="31482268"/>
<dbReference type="KEGG" id="pnu:Pnuc_1878"/>
<dbReference type="eggNOG" id="COG0817">
    <property type="taxonomic scope" value="Bacteria"/>
</dbReference>
<dbReference type="HOGENOM" id="CLU_091257_3_1_4"/>
<dbReference type="Proteomes" id="UP000000231">
    <property type="component" value="Chromosome"/>
</dbReference>
<dbReference type="GO" id="GO:0005737">
    <property type="term" value="C:cytoplasm"/>
    <property type="evidence" value="ECO:0007669"/>
    <property type="project" value="UniProtKB-SubCell"/>
</dbReference>
<dbReference type="GO" id="GO:0048476">
    <property type="term" value="C:Holliday junction resolvase complex"/>
    <property type="evidence" value="ECO:0007669"/>
    <property type="project" value="UniProtKB-UniRule"/>
</dbReference>
<dbReference type="GO" id="GO:0008821">
    <property type="term" value="F:crossover junction DNA endonuclease activity"/>
    <property type="evidence" value="ECO:0007669"/>
    <property type="project" value="UniProtKB-UniRule"/>
</dbReference>
<dbReference type="GO" id="GO:0003677">
    <property type="term" value="F:DNA binding"/>
    <property type="evidence" value="ECO:0007669"/>
    <property type="project" value="UniProtKB-KW"/>
</dbReference>
<dbReference type="GO" id="GO:0000287">
    <property type="term" value="F:magnesium ion binding"/>
    <property type="evidence" value="ECO:0007669"/>
    <property type="project" value="UniProtKB-UniRule"/>
</dbReference>
<dbReference type="GO" id="GO:0006310">
    <property type="term" value="P:DNA recombination"/>
    <property type="evidence" value="ECO:0007669"/>
    <property type="project" value="UniProtKB-UniRule"/>
</dbReference>
<dbReference type="GO" id="GO:0006281">
    <property type="term" value="P:DNA repair"/>
    <property type="evidence" value="ECO:0007669"/>
    <property type="project" value="UniProtKB-UniRule"/>
</dbReference>
<dbReference type="CDD" id="cd16962">
    <property type="entry name" value="RuvC"/>
    <property type="match status" value="1"/>
</dbReference>
<dbReference type="FunFam" id="3.30.420.10:FF:000002">
    <property type="entry name" value="Crossover junction endodeoxyribonuclease RuvC"/>
    <property type="match status" value="1"/>
</dbReference>
<dbReference type="Gene3D" id="3.30.420.10">
    <property type="entry name" value="Ribonuclease H-like superfamily/Ribonuclease H"/>
    <property type="match status" value="1"/>
</dbReference>
<dbReference type="HAMAP" id="MF_00034">
    <property type="entry name" value="RuvC"/>
    <property type="match status" value="1"/>
</dbReference>
<dbReference type="InterPro" id="IPR012337">
    <property type="entry name" value="RNaseH-like_sf"/>
</dbReference>
<dbReference type="InterPro" id="IPR036397">
    <property type="entry name" value="RNaseH_sf"/>
</dbReference>
<dbReference type="InterPro" id="IPR020563">
    <property type="entry name" value="X-over_junc_endoDNase_Mg_BS"/>
</dbReference>
<dbReference type="InterPro" id="IPR002176">
    <property type="entry name" value="X-over_junc_endoDNase_RuvC"/>
</dbReference>
<dbReference type="NCBIfam" id="TIGR00228">
    <property type="entry name" value="ruvC"/>
    <property type="match status" value="1"/>
</dbReference>
<dbReference type="PANTHER" id="PTHR30194">
    <property type="entry name" value="CROSSOVER JUNCTION ENDODEOXYRIBONUCLEASE RUVC"/>
    <property type="match status" value="1"/>
</dbReference>
<dbReference type="PANTHER" id="PTHR30194:SF3">
    <property type="entry name" value="CROSSOVER JUNCTION ENDODEOXYRIBONUCLEASE RUVC"/>
    <property type="match status" value="1"/>
</dbReference>
<dbReference type="Pfam" id="PF02075">
    <property type="entry name" value="RuvC"/>
    <property type="match status" value="1"/>
</dbReference>
<dbReference type="PRINTS" id="PR00696">
    <property type="entry name" value="RSOLVASERUVC"/>
</dbReference>
<dbReference type="SUPFAM" id="SSF53098">
    <property type="entry name" value="Ribonuclease H-like"/>
    <property type="match status" value="1"/>
</dbReference>
<dbReference type="PROSITE" id="PS01321">
    <property type="entry name" value="RUVC"/>
    <property type="match status" value="1"/>
</dbReference>
<gene>
    <name evidence="1" type="primary">ruvC</name>
    <name type="ordered locus">Pnuc_1878</name>
</gene>
<comment type="function">
    <text evidence="1">The RuvA-RuvB-RuvC complex processes Holliday junction (HJ) DNA during genetic recombination and DNA repair. Endonuclease that resolves HJ intermediates. Cleaves cruciform DNA by making single-stranded nicks across the HJ at symmetrical positions within the homologous arms, yielding a 5'-phosphate and a 3'-hydroxyl group; requires a central core of homology in the junction. The consensus cleavage sequence is 5'-(A/T)TT(C/G)-3'. Cleavage occurs on the 3'-side of the TT dinucleotide at the point of strand exchange. HJ branch migration catalyzed by RuvA-RuvB allows RuvC to scan DNA until it finds its consensus sequence, where it cleaves and resolves the cruciform DNA.</text>
</comment>
<comment type="catalytic activity">
    <reaction evidence="1">
        <text>Endonucleolytic cleavage at a junction such as a reciprocal single-stranded crossover between two homologous DNA duplexes (Holliday junction).</text>
        <dbReference type="EC" id="3.1.21.10"/>
    </reaction>
</comment>
<comment type="cofactor">
    <cofactor evidence="1">
        <name>Mg(2+)</name>
        <dbReference type="ChEBI" id="CHEBI:18420"/>
    </cofactor>
    <text evidence="1">Binds 2 Mg(2+) ion per subunit.</text>
</comment>
<comment type="subunit">
    <text evidence="1">Homodimer which binds Holliday junction (HJ) DNA. The HJ becomes 2-fold symmetrical on binding to RuvC with unstacked arms; it has a different conformation from HJ DNA in complex with RuvA. In the full resolvosome a probable DNA-RuvA(4)-RuvB(12)-RuvC(2) complex forms which resolves the HJ.</text>
</comment>
<comment type="subcellular location">
    <subcellularLocation>
        <location evidence="1">Cytoplasm</location>
    </subcellularLocation>
</comment>
<comment type="similarity">
    <text evidence="1">Belongs to the RuvC family.</text>
</comment>
<sequence length="172" mass="18228">MRWIGIDPGLRITGFGVIDVDGQKLTYVASGTIESGDPAKGLPERLGALYAGVKEVLETYRPEQAAIEEVFLNVNPRSTLMLGQARGAVIAALVSEKLPVAEYSALRVKQAIVGTGRAAKPQVQEMVKRLLRLSRAPGTDASDALGVAICAAHHSQIPKAITSALASKKRSK</sequence>
<protein>
    <recommendedName>
        <fullName evidence="1">Crossover junction endodeoxyribonuclease RuvC</fullName>
        <ecNumber evidence="1">3.1.21.10</ecNumber>
    </recommendedName>
    <alternativeName>
        <fullName evidence="1">Holliday junction nuclease RuvC</fullName>
    </alternativeName>
    <alternativeName>
        <fullName evidence="1">Holliday junction resolvase RuvC</fullName>
    </alternativeName>
</protein>
<feature type="chain" id="PRO_1000074492" description="Crossover junction endodeoxyribonuclease RuvC">
    <location>
        <begin position="1"/>
        <end position="172"/>
    </location>
</feature>
<feature type="active site" evidence="1">
    <location>
        <position position="7"/>
    </location>
</feature>
<feature type="active site" evidence="1">
    <location>
        <position position="68"/>
    </location>
</feature>
<feature type="active site" evidence="1">
    <location>
        <position position="140"/>
    </location>
</feature>
<feature type="binding site" evidence="1">
    <location>
        <position position="7"/>
    </location>
    <ligand>
        <name>Mg(2+)</name>
        <dbReference type="ChEBI" id="CHEBI:18420"/>
        <label>1</label>
    </ligand>
</feature>
<feature type="binding site" evidence="1">
    <location>
        <position position="68"/>
    </location>
    <ligand>
        <name>Mg(2+)</name>
        <dbReference type="ChEBI" id="CHEBI:18420"/>
        <label>2</label>
    </ligand>
</feature>
<feature type="binding site" evidence="1">
    <location>
        <position position="140"/>
    </location>
    <ligand>
        <name>Mg(2+)</name>
        <dbReference type="ChEBI" id="CHEBI:18420"/>
        <label>1</label>
    </ligand>
</feature>
<name>RUVC_POLAQ</name>
<evidence type="ECO:0000255" key="1">
    <source>
        <dbReference type="HAMAP-Rule" id="MF_00034"/>
    </source>
</evidence>
<proteinExistence type="inferred from homology"/>
<accession>A4T026</accession>
<keyword id="KW-0963">Cytoplasm</keyword>
<keyword id="KW-0227">DNA damage</keyword>
<keyword id="KW-0233">DNA recombination</keyword>
<keyword id="KW-0234">DNA repair</keyword>
<keyword id="KW-0238">DNA-binding</keyword>
<keyword id="KW-0255">Endonuclease</keyword>
<keyword id="KW-0378">Hydrolase</keyword>
<keyword id="KW-0460">Magnesium</keyword>
<keyword id="KW-0479">Metal-binding</keyword>
<keyword id="KW-0540">Nuclease</keyword>
<keyword id="KW-1185">Reference proteome</keyword>
<organism>
    <name type="scientific">Polynucleobacter asymbioticus (strain DSM 18221 / CIP 109841 / QLW-P1DMWA-1)</name>
    <name type="common">Polynucleobacter necessarius subsp. asymbioticus</name>
    <dbReference type="NCBI Taxonomy" id="312153"/>
    <lineage>
        <taxon>Bacteria</taxon>
        <taxon>Pseudomonadati</taxon>
        <taxon>Pseudomonadota</taxon>
        <taxon>Betaproteobacteria</taxon>
        <taxon>Burkholderiales</taxon>
        <taxon>Burkholderiaceae</taxon>
        <taxon>Polynucleobacter</taxon>
    </lineage>
</organism>
<reference key="1">
    <citation type="journal article" date="2012" name="Stand. Genomic Sci.">
        <title>Complete genome sequence of Polynucleobacter necessarius subsp. asymbioticus type strain (QLW-P1DMWA-1(T)).</title>
        <authorList>
            <person name="Meincke L."/>
            <person name="Copeland A."/>
            <person name="Lapidus A."/>
            <person name="Lucas S."/>
            <person name="Berry K.W."/>
            <person name="Del Rio T.G."/>
            <person name="Hammon N."/>
            <person name="Dalin E."/>
            <person name="Tice H."/>
            <person name="Pitluck S."/>
            <person name="Richardson P."/>
            <person name="Bruce D."/>
            <person name="Goodwin L."/>
            <person name="Han C."/>
            <person name="Tapia R."/>
            <person name="Detter J.C."/>
            <person name="Schmutz J."/>
            <person name="Brettin T."/>
            <person name="Larimer F."/>
            <person name="Land M."/>
            <person name="Hauser L."/>
            <person name="Kyrpides N.C."/>
            <person name="Ivanova N."/>
            <person name="Goker M."/>
            <person name="Woyke T."/>
            <person name="Wu Q.L."/>
            <person name="Pockl M."/>
            <person name="Hahn M.W."/>
            <person name="Klenk H.P."/>
        </authorList>
    </citation>
    <scope>NUCLEOTIDE SEQUENCE [LARGE SCALE GENOMIC DNA]</scope>
    <source>
        <strain>DSM 18221 / CIP 109841 / QLW-P1DMWA-1</strain>
    </source>
</reference>